<name>ADK1_ARATH</name>
<reference key="1">
    <citation type="journal article" date="2000" name="Plant Physiol.">
        <title>Adenosine kinase of Arabidopsis. Kinetic properties and gene expression.</title>
        <authorList>
            <person name="Moffatt B.A."/>
            <person name="Wang L."/>
            <person name="Allen M.S."/>
            <person name="Stevens Y.Y."/>
            <person name="Qin W."/>
            <person name="Snider J."/>
            <person name="von Schwartzenberg K."/>
        </authorList>
    </citation>
    <scope>NUCLEOTIDE SEQUENCE [GENOMIC DNA / MRNA] (ISOFORM 1)</scope>
    <scope>FUNCTION</scope>
    <scope>CATALYTIC ACTIVITY</scope>
    <scope>BIOPHYSICOCHEMICAL PROPERTIES</scope>
    <scope>TISSUE SPECIFICITY</scope>
    <source>
        <strain>cv. Columbia</strain>
    </source>
</reference>
<reference key="2">
    <citation type="journal article" date="2000" name="Nature">
        <title>Sequence and analysis of chromosome 3 of the plant Arabidopsis thaliana.</title>
        <authorList>
            <person name="Salanoubat M."/>
            <person name="Lemcke K."/>
            <person name="Rieger M."/>
            <person name="Ansorge W."/>
            <person name="Unseld M."/>
            <person name="Fartmann B."/>
            <person name="Valle G."/>
            <person name="Bloecker H."/>
            <person name="Perez-Alonso M."/>
            <person name="Obermaier B."/>
            <person name="Delseny M."/>
            <person name="Boutry M."/>
            <person name="Grivell L.A."/>
            <person name="Mache R."/>
            <person name="Puigdomenech P."/>
            <person name="De Simone V."/>
            <person name="Choisne N."/>
            <person name="Artiguenave F."/>
            <person name="Robert C."/>
            <person name="Brottier P."/>
            <person name="Wincker P."/>
            <person name="Cattolico L."/>
            <person name="Weissenbach J."/>
            <person name="Saurin W."/>
            <person name="Quetier F."/>
            <person name="Schaefer M."/>
            <person name="Mueller-Auer S."/>
            <person name="Gabel C."/>
            <person name="Fuchs M."/>
            <person name="Benes V."/>
            <person name="Wurmbach E."/>
            <person name="Drzonek H."/>
            <person name="Erfle H."/>
            <person name="Jordan N."/>
            <person name="Bangert S."/>
            <person name="Wiedelmann R."/>
            <person name="Kranz H."/>
            <person name="Voss H."/>
            <person name="Holland R."/>
            <person name="Brandt P."/>
            <person name="Nyakatura G."/>
            <person name="Vezzi A."/>
            <person name="D'Angelo M."/>
            <person name="Pallavicini A."/>
            <person name="Toppo S."/>
            <person name="Simionati B."/>
            <person name="Conrad A."/>
            <person name="Hornischer K."/>
            <person name="Kauer G."/>
            <person name="Loehnert T.-H."/>
            <person name="Nordsiek G."/>
            <person name="Reichelt J."/>
            <person name="Scharfe M."/>
            <person name="Schoen O."/>
            <person name="Bargues M."/>
            <person name="Terol J."/>
            <person name="Climent J."/>
            <person name="Navarro P."/>
            <person name="Collado C."/>
            <person name="Perez-Perez A."/>
            <person name="Ottenwaelder B."/>
            <person name="Duchemin D."/>
            <person name="Cooke R."/>
            <person name="Laudie M."/>
            <person name="Berger-Llauro C."/>
            <person name="Purnelle B."/>
            <person name="Masuy D."/>
            <person name="de Haan M."/>
            <person name="Maarse A.C."/>
            <person name="Alcaraz J.-P."/>
            <person name="Cottet A."/>
            <person name="Casacuberta E."/>
            <person name="Monfort A."/>
            <person name="Argiriou A."/>
            <person name="Flores M."/>
            <person name="Liguori R."/>
            <person name="Vitale D."/>
            <person name="Mannhaupt G."/>
            <person name="Haase D."/>
            <person name="Schoof H."/>
            <person name="Rudd S."/>
            <person name="Zaccaria P."/>
            <person name="Mewes H.-W."/>
            <person name="Mayer K.F.X."/>
            <person name="Kaul S."/>
            <person name="Town C.D."/>
            <person name="Koo H.L."/>
            <person name="Tallon L.J."/>
            <person name="Jenkins J."/>
            <person name="Rooney T."/>
            <person name="Rizzo M."/>
            <person name="Walts A."/>
            <person name="Utterback T."/>
            <person name="Fujii C.Y."/>
            <person name="Shea T.P."/>
            <person name="Creasy T.H."/>
            <person name="Haas B."/>
            <person name="Maiti R."/>
            <person name="Wu D."/>
            <person name="Peterson J."/>
            <person name="Van Aken S."/>
            <person name="Pai G."/>
            <person name="Militscher J."/>
            <person name="Sellers P."/>
            <person name="Gill J.E."/>
            <person name="Feldblyum T.V."/>
            <person name="Preuss D."/>
            <person name="Lin X."/>
            <person name="Nierman W.C."/>
            <person name="Salzberg S.L."/>
            <person name="White O."/>
            <person name="Venter J.C."/>
            <person name="Fraser C.M."/>
            <person name="Kaneko T."/>
            <person name="Nakamura Y."/>
            <person name="Sato S."/>
            <person name="Kato T."/>
            <person name="Asamizu E."/>
            <person name="Sasamoto S."/>
            <person name="Kimura T."/>
            <person name="Idesawa K."/>
            <person name="Kawashima K."/>
            <person name="Kishida Y."/>
            <person name="Kiyokawa C."/>
            <person name="Kohara M."/>
            <person name="Matsumoto M."/>
            <person name="Matsuno A."/>
            <person name="Muraki A."/>
            <person name="Nakayama S."/>
            <person name="Nakazaki N."/>
            <person name="Shinpo S."/>
            <person name="Takeuchi C."/>
            <person name="Wada T."/>
            <person name="Watanabe A."/>
            <person name="Yamada M."/>
            <person name="Yasuda M."/>
            <person name="Tabata S."/>
        </authorList>
    </citation>
    <scope>NUCLEOTIDE SEQUENCE [LARGE SCALE GENOMIC DNA]</scope>
    <source>
        <strain>cv. Columbia</strain>
    </source>
</reference>
<reference key="3">
    <citation type="journal article" date="2017" name="Plant J.">
        <title>Araport11: a complete reannotation of the Arabidopsis thaliana reference genome.</title>
        <authorList>
            <person name="Cheng C.Y."/>
            <person name="Krishnakumar V."/>
            <person name="Chan A.P."/>
            <person name="Thibaud-Nissen F."/>
            <person name="Schobel S."/>
            <person name="Town C.D."/>
        </authorList>
    </citation>
    <scope>GENOME REANNOTATION</scope>
    <source>
        <strain>cv. Columbia</strain>
    </source>
</reference>
<reference key="4">
    <citation type="journal article" date="2003" name="Science">
        <title>Empirical analysis of transcriptional activity in the Arabidopsis genome.</title>
        <authorList>
            <person name="Yamada K."/>
            <person name="Lim J."/>
            <person name="Dale J.M."/>
            <person name="Chen H."/>
            <person name="Shinn P."/>
            <person name="Palm C.J."/>
            <person name="Southwick A.M."/>
            <person name="Wu H.C."/>
            <person name="Kim C.J."/>
            <person name="Nguyen M."/>
            <person name="Pham P.K."/>
            <person name="Cheuk R.F."/>
            <person name="Karlin-Newmann G."/>
            <person name="Liu S.X."/>
            <person name="Lam B."/>
            <person name="Sakano H."/>
            <person name="Wu T."/>
            <person name="Yu G."/>
            <person name="Miranda M."/>
            <person name="Quach H.L."/>
            <person name="Tripp M."/>
            <person name="Chang C.H."/>
            <person name="Lee J.M."/>
            <person name="Toriumi M.J."/>
            <person name="Chan M.M."/>
            <person name="Tang C.C."/>
            <person name="Onodera C.S."/>
            <person name="Deng J.M."/>
            <person name="Akiyama K."/>
            <person name="Ansari Y."/>
            <person name="Arakawa T."/>
            <person name="Banh J."/>
            <person name="Banno F."/>
            <person name="Bowser L."/>
            <person name="Brooks S.Y."/>
            <person name="Carninci P."/>
            <person name="Chao Q."/>
            <person name="Choy N."/>
            <person name="Enju A."/>
            <person name="Goldsmith A.D."/>
            <person name="Gurjal M."/>
            <person name="Hansen N.F."/>
            <person name="Hayashizaki Y."/>
            <person name="Johnson-Hopson C."/>
            <person name="Hsuan V.W."/>
            <person name="Iida K."/>
            <person name="Karnes M."/>
            <person name="Khan S."/>
            <person name="Koesema E."/>
            <person name="Ishida J."/>
            <person name="Jiang P.X."/>
            <person name="Jones T."/>
            <person name="Kawai J."/>
            <person name="Kamiya A."/>
            <person name="Meyers C."/>
            <person name="Nakajima M."/>
            <person name="Narusaka M."/>
            <person name="Seki M."/>
            <person name="Sakurai T."/>
            <person name="Satou M."/>
            <person name="Tamse R."/>
            <person name="Vaysberg M."/>
            <person name="Wallender E.K."/>
            <person name="Wong C."/>
            <person name="Yamamura Y."/>
            <person name="Yuan S."/>
            <person name="Shinozaki K."/>
            <person name="Davis R.W."/>
            <person name="Theologis A."/>
            <person name="Ecker J.R."/>
        </authorList>
    </citation>
    <scope>NUCLEOTIDE SEQUENCE [LARGE SCALE MRNA] (ISOFORM 1)</scope>
    <source>
        <strain>cv. Columbia</strain>
    </source>
</reference>
<reference key="5">
    <citation type="submission" date="2008-06" db="EMBL/GenBank/DDBJ databases">
        <title>Arabidopsis ORF clones.</title>
        <authorList>
            <person name="De Los Reyes C."/>
            <person name="Quan R."/>
            <person name="Chen H."/>
            <person name="Bautista V.R."/>
            <person name="Kim C.J."/>
            <person name="Ecker J.R."/>
        </authorList>
    </citation>
    <scope>NUCLEOTIDE SEQUENCE [LARGE SCALE MRNA] (ISOFORM 2)</scope>
    <source>
        <strain>cv. Columbia</strain>
    </source>
</reference>
<reference key="6">
    <citation type="journal article" date="2003" name="Plant Cell">
        <title>Adenosine kinase is inactivated by geminivirus AL2 and L2 proteins.</title>
        <authorList>
            <person name="Wang H."/>
            <person name="Hao L."/>
            <person name="Shung C.-Y."/>
            <person name="Sunter G."/>
            <person name="Bisaro D.M."/>
        </authorList>
    </citation>
    <scope>INTERACTION WITH TOMATO GOLDEN MOSAIC VIRUS AL2 AND BEET CURLY TOP VIRUS L2</scope>
</reference>
<reference key="7">
    <citation type="journal article" date="2007" name="J. Exp. Bot.">
        <title>Methyl recycling activities are co-ordinately regulated during plant development.</title>
        <authorList>
            <person name="Pereira L.A.R."/>
            <person name="Todorova M."/>
            <person name="Cai X."/>
            <person name="Makaroff C.A."/>
            <person name="Emery R.J.N."/>
            <person name="Moffatt B.A."/>
        </authorList>
    </citation>
    <scope>FUNCTION</scope>
    <scope>TISSUE SPECIFICITY</scope>
    <scope>DEVELOPMENTAL STAGE</scope>
</reference>
<evidence type="ECO:0000250" key="1">
    <source>
        <dbReference type="UniProtKB" id="P55263"/>
    </source>
</evidence>
<evidence type="ECO:0000250" key="2">
    <source>
        <dbReference type="UniProtKB" id="Q9LZG0"/>
    </source>
</evidence>
<evidence type="ECO:0000269" key="3">
    <source>
    </source>
</evidence>
<evidence type="ECO:0000269" key="4">
    <source>
    </source>
</evidence>
<evidence type="ECO:0000269" key="5">
    <source>
    </source>
</evidence>
<evidence type="ECO:0000303" key="6">
    <source>
    </source>
</evidence>
<evidence type="ECO:0000303" key="7">
    <source ref="5"/>
</evidence>
<evidence type="ECO:0000305" key="8"/>
<evidence type="ECO:0000312" key="9">
    <source>
        <dbReference type="Araport" id="AT3G09820"/>
    </source>
</evidence>
<evidence type="ECO:0000312" key="10">
    <source>
        <dbReference type="EMBL" id="AAF23253.1"/>
    </source>
</evidence>
<gene>
    <name evidence="6" type="primary">ADK1</name>
    <name evidence="9" type="ordered locus">At3g09820</name>
    <name evidence="10" type="ORF">F8A24.13</name>
</gene>
<keyword id="KW-0025">Alternative splicing</keyword>
<keyword id="KW-0067">ATP-binding</keyword>
<keyword id="KW-0945">Host-virus interaction</keyword>
<keyword id="KW-0418">Kinase</keyword>
<keyword id="KW-0460">Magnesium</keyword>
<keyword id="KW-0547">Nucleotide-binding</keyword>
<keyword id="KW-0660">Purine salvage</keyword>
<keyword id="KW-1185">Reference proteome</keyword>
<keyword id="KW-0808">Transferase</keyword>
<comment type="function">
    <text evidence="3 5">ATP dependent phosphorylation of adenosine and other related nucleoside analogs to monophosphate derivatives (PubMed:11115893). Essential to sustain methyl recycling (PubMed:17272833).</text>
</comment>
<comment type="catalytic activity">
    <reaction evidence="3">
        <text>adenosine + ATP = AMP + ADP + H(+)</text>
        <dbReference type="Rhea" id="RHEA:20824"/>
        <dbReference type="ChEBI" id="CHEBI:15378"/>
        <dbReference type="ChEBI" id="CHEBI:16335"/>
        <dbReference type="ChEBI" id="CHEBI:30616"/>
        <dbReference type="ChEBI" id="CHEBI:456215"/>
        <dbReference type="ChEBI" id="CHEBI:456216"/>
        <dbReference type="EC" id="2.7.1.20"/>
    </reaction>
    <physiologicalReaction direction="left-to-right" evidence="3">
        <dbReference type="Rhea" id="RHEA:20825"/>
    </physiologicalReaction>
</comment>
<comment type="cofactor">
    <cofactor evidence="1">
        <name>Mg(2+)</name>
        <dbReference type="ChEBI" id="CHEBI:18420"/>
    </cofactor>
</comment>
<comment type="activity regulation">
    <text evidence="2">Inactivated by the begomovirus AL2 protein or the curtovirus L2 protein.</text>
</comment>
<comment type="biophysicochemical properties">
    <kinetics>
        <KM evidence="3">0.5 uM for adenosine</KM>
        <KM evidence="3">350 uM for ATP</KM>
        <Vmax evidence="3">2.7 umol/min/mg enzyme with adenosine as substrate</Vmax>
        <Vmax evidence="3">3.5 umol/min/mg enzyme with ATP as substrate</Vmax>
    </kinetics>
</comment>
<comment type="pathway">
    <text evidence="8">Purine metabolism; AMP biosynthesis via salvage pathway; AMP from adenosine: step 1/1.</text>
</comment>
<comment type="subunit">
    <text evidence="4">Interacts with the begomovirus AL2 protein and the curtovirus L2 protein.</text>
</comment>
<comment type="alternative products">
    <event type="alternative splicing"/>
    <isoform>
        <id>Q9SF85-1</id>
        <name>1</name>
        <sequence type="displayed"/>
    </isoform>
    <isoform>
        <id>Q9SF85-2</id>
        <name>2</name>
        <sequence type="described" ref="VSP_040515 VSP_040516"/>
    </isoform>
</comment>
<comment type="tissue specificity">
    <text evidence="3 5">Widely expressed.</text>
</comment>
<comment type="developmental stage">
    <text evidence="5">Up-regulated during the lignification process in inflorescence stems.</text>
</comment>
<comment type="similarity">
    <text evidence="8">Belongs to the carbohydrate kinase PfkB family.</text>
</comment>
<proteinExistence type="evidence at protein level"/>
<protein>
    <recommendedName>
        <fullName evidence="6">Adenosine kinase 1</fullName>
        <shortName evidence="8">AK 1</shortName>
        <ecNumber evidence="3">2.7.1.20</ecNumber>
    </recommendedName>
    <alternativeName>
        <fullName evidence="6">Adenosine 5'-phosphotransferase 1</fullName>
    </alternativeName>
</protein>
<sequence>MASSDFDGILLGMGNPLLDVSAVVDQQFLDKYDIKLNNAILAEDKHLPMYDEMSQKFNVEYIAGGATQNSIKVAQWMLQVPGATSYMGSIGKDKYGEAMKKDATAAGVYVHYYEDEATPTGTCGVCVLGGERSLIANLSAANCYKVEHLKKPENWALVEKAKFYYIAGFFLTVSPESIQLVREHAAANNKVFTMNLSAPFICEFFKDVQEKCLPYMDYIFGNETEARTFSRVHGWETDDVEQIAIKMSQLPKASGTYKRTTVITQGADPVVVAEDGKVKKYPVIPLPKEKLVDTNGAGDAFVGGFLSQLVHGKGIEECVRAGCYASNVVIQRSGCTYPEKPDFN</sequence>
<feature type="chain" id="PRO_0000080057" description="Adenosine kinase 1">
    <location>
        <begin position="1"/>
        <end position="344"/>
    </location>
</feature>
<feature type="active site" evidence="1">
    <location>
        <position position="299"/>
    </location>
</feature>
<feature type="splice variant" id="VSP_040515" description="In isoform 2." evidence="7">
    <location>
        <begin position="1"/>
        <end position="42"/>
    </location>
</feature>
<feature type="splice variant" id="VSP_040516" description="In isoform 2." evidence="7">
    <original>EDKHLPM</original>
    <variation>MIIGMFR</variation>
    <location>
        <begin position="43"/>
        <end position="49"/>
    </location>
</feature>
<organism>
    <name type="scientific">Arabidopsis thaliana</name>
    <name type="common">Mouse-ear cress</name>
    <dbReference type="NCBI Taxonomy" id="3702"/>
    <lineage>
        <taxon>Eukaryota</taxon>
        <taxon>Viridiplantae</taxon>
        <taxon>Streptophyta</taxon>
        <taxon>Embryophyta</taxon>
        <taxon>Tracheophyta</taxon>
        <taxon>Spermatophyta</taxon>
        <taxon>Magnoliopsida</taxon>
        <taxon>eudicotyledons</taxon>
        <taxon>Gunneridae</taxon>
        <taxon>Pentapetalae</taxon>
        <taxon>rosids</taxon>
        <taxon>malvids</taxon>
        <taxon>Brassicales</taxon>
        <taxon>Brassicaceae</taxon>
        <taxon>Camelineae</taxon>
        <taxon>Arabidopsis</taxon>
    </lineage>
</organism>
<accession>Q9SF85</accession>
<accession>B3LFB3</accession>
<dbReference type="EC" id="2.7.1.20" evidence="3"/>
<dbReference type="EMBL" id="AF180896">
    <property type="protein sequence ID" value="AAG45248.1"/>
    <property type="molecule type" value="Genomic_DNA"/>
</dbReference>
<dbReference type="EMBL" id="AF180894">
    <property type="protein sequence ID" value="AAG45246.1"/>
    <property type="molecule type" value="mRNA"/>
</dbReference>
<dbReference type="EMBL" id="AC015985">
    <property type="protein sequence ID" value="AAF23253.1"/>
    <property type="molecule type" value="Genomic_DNA"/>
</dbReference>
<dbReference type="EMBL" id="CP002686">
    <property type="protein sequence ID" value="AEE74816.1"/>
    <property type="molecule type" value="Genomic_DNA"/>
</dbReference>
<dbReference type="EMBL" id="CP002686">
    <property type="protein sequence ID" value="AEE74817.1"/>
    <property type="molecule type" value="Genomic_DNA"/>
</dbReference>
<dbReference type="EMBL" id="AF375451">
    <property type="protein sequence ID" value="AAK53035.1"/>
    <property type="molecule type" value="mRNA"/>
</dbReference>
<dbReference type="EMBL" id="BT033101">
    <property type="protein sequence ID" value="ACF16163.1"/>
    <property type="molecule type" value="mRNA"/>
</dbReference>
<dbReference type="RefSeq" id="NP_187593.1">
    <molecule id="Q9SF85-1"/>
    <property type="nucleotide sequence ID" value="NM_111817.4"/>
</dbReference>
<dbReference type="RefSeq" id="NP_974269.1">
    <molecule id="Q9SF85-2"/>
    <property type="nucleotide sequence ID" value="NM_202540.1"/>
</dbReference>
<dbReference type="SMR" id="Q9SF85"/>
<dbReference type="BioGRID" id="5474">
    <property type="interactions" value="5"/>
</dbReference>
<dbReference type="FunCoup" id="Q9SF85">
    <property type="interactions" value="3371"/>
</dbReference>
<dbReference type="IntAct" id="Q9SF85">
    <property type="interactions" value="1"/>
</dbReference>
<dbReference type="STRING" id="3702.Q9SF85"/>
<dbReference type="MetOSite" id="Q9SF85"/>
<dbReference type="PaxDb" id="3702-AT3G09820.1"/>
<dbReference type="ProMEX" id="Q9SF85"/>
<dbReference type="ProteomicsDB" id="244755">
    <molecule id="Q9SF85-1"/>
</dbReference>
<dbReference type="EnsemblPlants" id="AT3G09820.1">
    <molecule id="Q9SF85-1"/>
    <property type="protein sequence ID" value="AT3G09820.1"/>
    <property type="gene ID" value="AT3G09820"/>
</dbReference>
<dbReference type="EnsemblPlants" id="AT3G09820.2">
    <molecule id="Q9SF85-2"/>
    <property type="protein sequence ID" value="AT3G09820.2"/>
    <property type="gene ID" value="AT3G09820"/>
</dbReference>
<dbReference type="GeneID" id="820140"/>
<dbReference type="Gramene" id="AT3G09820.1">
    <molecule id="Q9SF85-1"/>
    <property type="protein sequence ID" value="AT3G09820.1"/>
    <property type="gene ID" value="AT3G09820"/>
</dbReference>
<dbReference type="Gramene" id="AT3G09820.2">
    <molecule id="Q9SF85-2"/>
    <property type="protein sequence ID" value="AT3G09820.2"/>
    <property type="gene ID" value="AT3G09820"/>
</dbReference>
<dbReference type="KEGG" id="ath:AT3G09820"/>
<dbReference type="Araport" id="AT3G09820"/>
<dbReference type="TAIR" id="AT3G09820">
    <property type="gene designation" value="ADK1"/>
</dbReference>
<dbReference type="eggNOG" id="KOG2854">
    <property type="taxonomic scope" value="Eukaryota"/>
</dbReference>
<dbReference type="HOGENOM" id="CLU_045832_0_0_1"/>
<dbReference type="InParanoid" id="Q9SF85"/>
<dbReference type="OMA" id="YCATECI"/>
<dbReference type="PhylomeDB" id="Q9SF85"/>
<dbReference type="BioCyc" id="MetaCyc:AT3G09820-MONOMER"/>
<dbReference type="BRENDA" id="2.7.1.20">
    <property type="organism ID" value="399"/>
</dbReference>
<dbReference type="UniPathway" id="UPA00588">
    <property type="reaction ID" value="UER00659"/>
</dbReference>
<dbReference type="CD-CODE" id="4299E36E">
    <property type="entry name" value="Nucleolus"/>
</dbReference>
<dbReference type="PRO" id="PR:Q9SF85"/>
<dbReference type="Proteomes" id="UP000006548">
    <property type="component" value="Chromosome 3"/>
</dbReference>
<dbReference type="ExpressionAtlas" id="Q9SF85">
    <property type="expression patterns" value="baseline and differential"/>
</dbReference>
<dbReference type="GO" id="GO:0048046">
    <property type="term" value="C:apoplast"/>
    <property type="evidence" value="ECO:0007005"/>
    <property type="project" value="TAIR"/>
</dbReference>
<dbReference type="GO" id="GO:0005829">
    <property type="term" value="C:cytosol"/>
    <property type="evidence" value="ECO:0007005"/>
    <property type="project" value="TAIR"/>
</dbReference>
<dbReference type="GO" id="GO:0005886">
    <property type="term" value="C:plasma membrane"/>
    <property type="evidence" value="ECO:0007005"/>
    <property type="project" value="TAIR"/>
</dbReference>
<dbReference type="GO" id="GO:0009506">
    <property type="term" value="C:plasmodesma"/>
    <property type="evidence" value="ECO:0007005"/>
    <property type="project" value="TAIR"/>
</dbReference>
<dbReference type="GO" id="GO:0004001">
    <property type="term" value="F:adenosine kinase activity"/>
    <property type="evidence" value="ECO:0000314"/>
    <property type="project" value="TAIR"/>
</dbReference>
<dbReference type="GO" id="GO:0005524">
    <property type="term" value="F:ATP binding"/>
    <property type="evidence" value="ECO:0007669"/>
    <property type="project" value="UniProtKB-KW"/>
</dbReference>
<dbReference type="GO" id="GO:0005507">
    <property type="term" value="F:copper ion binding"/>
    <property type="evidence" value="ECO:0007005"/>
    <property type="project" value="TAIR"/>
</dbReference>
<dbReference type="GO" id="GO:0006169">
    <property type="term" value="P:adenosine salvage"/>
    <property type="evidence" value="ECO:0000304"/>
    <property type="project" value="TAIR"/>
</dbReference>
<dbReference type="GO" id="GO:0044209">
    <property type="term" value="P:AMP salvage"/>
    <property type="evidence" value="ECO:0007669"/>
    <property type="project" value="UniProtKB-UniPathway"/>
</dbReference>
<dbReference type="GO" id="GO:0080094">
    <property type="term" value="P:response to trehalose-6-phosphate"/>
    <property type="evidence" value="ECO:0000270"/>
    <property type="project" value="TAIR"/>
</dbReference>
<dbReference type="CDD" id="cd01168">
    <property type="entry name" value="adenosine_kinase"/>
    <property type="match status" value="1"/>
</dbReference>
<dbReference type="FunFam" id="3.40.1190.20:FF:000006">
    <property type="entry name" value="Adenosine kinase 2"/>
    <property type="match status" value="1"/>
</dbReference>
<dbReference type="FunFam" id="3.30.1110.10:FF:000001">
    <property type="entry name" value="Adenosine kinase a"/>
    <property type="match status" value="1"/>
</dbReference>
<dbReference type="Gene3D" id="3.30.1110.10">
    <property type="match status" value="1"/>
</dbReference>
<dbReference type="Gene3D" id="3.40.1190.20">
    <property type="match status" value="1"/>
</dbReference>
<dbReference type="InterPro" id="IPR001805">
    <property type="entry name" value="Adenokinase"/>
</dbReference>
<dbReference type="InterPro" id="IPR002173">
    <property type="entry name" value="Carboh/pur_kinase_PfkB_CS"/>
</dbReference>
<dbReference type="InterPro" id="IPR011611">
    <property type="entry name" value="PfkB_dom"/>
</dbReference>
<dbReference type="InterPro" id="IPR029056">
    <property type="entry name" value="Ribokinase-like"/>
</dbReference>
<dbReference type="PANTHER" id="PTHR45769">
    <property type="entry name" value="ADENOSINE KINASE"/>
    <property type="match status" value="1"/>
</dbReference>
<dbReference type="PANTHER" id="PTHR45769:SF3">
    <property type="entry name" value="ADENOSINE KINASE"/>
    <property type="match status" value="1"/>
</dbReference>
<dbReference type="Pfam" id="PF00294">
    <property type="entry name" value="PfkB"/>
    <property type="match status" value="1"/>
</dbReference>
<dbReference type="PRINTS" id="PR00989">
    <property type="entry name" value="ADENOKINASE"/>
</dbReference>
<dbReference type="SUPFAM" id="SSF53613">
    <property type="entry name" value="Ribokinase-like"/>
    <property type="match status" value="1"/>
</dbReference>
<dbReference type="PROSITE" id="PS00584">
    <property type="entry name" value="PFKB_KINASES_2"/>
    <property type="match status" value="1"/>
</dbReference>